<reference key="1">
    <citation type="journal article" date="2009" name="PLoS Genet.">
        <title>Organised genome dynamics in the Escherichia coli species results in highly diverse adaptive paths.</title>
        <authorList>
            <person name="Touchon M."/>
            <person name="Hoede C."/>
            <person name="Tenaillon O."/>
            <person name="Barbe V."/>
            <person name="Baeriswyl S."/>
            <person name="Bidet P."/>
            <person name="Bingen E."/>
            <person name="Bonacorsi S."/>
            <person name="Bouchier C."/>
            <person name="Bouvet O."/>
            <person name="Calteau A."/>
            <person name="Chiapello H."/>
            <person name="Clermont O."/>
            <person name="Cruveiller S."/>
            <person name="Danchin A."/>
            <person name="Diard M."/>
            <person name="Dossat C."/>
            <person name="Karoui M.E."/>
            <person name="Frapy E."/>
            <person name="Garry L."/>
            <person name="Ghigo J.M."/>
            <person name="Gilles A.M."/>
            <person name="Johnson J."/>
            <person name="Le Bouguenec C."/>
            <person name="Lescat M."/>
            <person name="Mangenot S."/>
            <person name="Martinez-Jehanne V."/>
            <person name="Matic I."/>
            <person name="Nassif X."/>
            <person name="Oztas S."/>
            <person name="Petit M.A."/>
            <person name="Pichon C."/>
            <person name="Rouy Z."/>
            <person name="Ruf C.S."/>
            <person name="Schneider D."/>
            <person name="Tourret J."/>
            <person name="Vacherie B."/>
            <person name="Vallenet D."/>
            <person name="Medigue C."/>
            <person name="Rocha E.P.C."/>
            <person name="Denamur E."/>
        </authorList>
    </citation>
    <scope>NUCLEOTIDE SEQUENCE [LARGE SCALE GENOMIC DNA]</scope>
    <source>
        <strain>ED1a</strain>
    </source>
</reference>
<keyword id="KW-0378">Hydrolase</keyword>
<keyword id="KW-0408">Iron</keyword>
<keyword id="KW-0479">Metal-binding</keyword>
<keyword id="KW-0648">Protein biosynthesis</keyword>
<feature type="chain" id="PRO_1000200733" description="Peptide deformylase">
    <location>
        <begin position="1"/>
        <end position="169"/>
    </location>
</feature>
<feature type="active site" evidence="1">
    <location>
        <position position="134"/>
    </location>
</feature>
<feature type="binding site" evidence="1">
    <location>
        <position position="91"/>
    </location>
    <ligand>
        <name>Fe cation</name>
        <dbReference type="ChEBI" id="CHEBI:24875"/>
    </ligand>
</feature>
<feature type="binding site" evidence="1">
    <location>
        <position position="133"/>
    </location>
    <ligand>
        <name>Fe cation</name>
        <dbReference type="ChEBI" id="CHEBI:24875"/>
    </ligand>
</feature>
<feature type="binding site" evidence="1">
    <location>
        <position position="137"/>
    </location>
    <ligand>
        <name>Fe cation</name>
        <dbReference type="ChEBI" id="CHEBI:24875"/>
    </ligand>
</feature>
<sequence length="169" mass="19328">MSVLQVLHIPDERLRKVAKPVEEVNAEIQRIVDDMFETMYAEEGIGLAATQVDIHQRIIVIDVSENRDERLVLINPELLEKSGETGIEEGCLSIPEQRALVPRAEKVKIRALDRDGKPFELEADGLLAICIQHEMDHLVGKLFMDYLSPLKQQRIRQKVEKLDRLKARA</sequence>
<gene>
    <name evidence="1" type="primary">def</name>
    <name type="ordered locus">ECED1_3950</name>
</gene>
<proteinExistence type="inferred from homology"/>
<organism>
    <name type="scientific">Escherichia coli O81 (strain ED1a)</name>
    <dbReference type="NCBI Taxonomy" id="585397"/>
    <lineage>
        <taxon>Bacteria</taxon>
        <taxon>Pseudomonadati</taxon>
        <taxon>Pseudomonadota</taxon>
        <taxon>Gammaproteobacteria</taxon>
        <taxon>Enterobacterales</taxon>
        <taxon>Enterobacteriaceae</taxon>
        <taxon>Escherichia</taxon>
    </lineage>
</organism>
<protein>
    <recommendedName>
        <fullName evidence="1">Peptide deformylase</fullName>
        <shortName evidence="1">PDF</shortName>
        <ecNumber evidence="1">3.5.1.88</ecNumber>
    </recommendedName>
    <alternativeName>
        <fullName evidence="1">Polypeptide deformylase</fullName>
    </alternativeName>
</protein>
<name>DEF_ECO81</name>
<accession>B7N171</accession>
<dbReference type="EC" id="3.5.1.88" evidence="1"/>
<dbReference type="EMBL" id="CU928162">
    <property type="protein sequence ID" value="CAR10089.2"/>
    <property type="molecule type" value="Genomic_DNA"/>
</dbReference>
<dbReference type="RefSeq" id="WP_000114984.1">
    <property type="nucleotide sequence ID" value="NC_011745.1"/>
</dbReference>
<dbReference type="SMR" id="B7N171"/>
<dbReference type="GeneID" id="89518132"/>
<dbReference type="KEGG" id="ecq:ECED1_3950"/>
<dbReference type="HOGENOM" id="CLU_061901_2_1_6"/>
<dbReference type="Proteomes" id="UP000000748">
    <property type="component" value="Chromosome"/>
</dbReference>
<dbReference type="GO" id="GO:0046872">
    <property type="term" value="F:metal ion binding"/>
    <property type="evidence" value="ECO:0007669"/>
    <property type="project" value="UniProtKB-KW"/>
</dbReference>
<dbReference type="GO" id="GO:0042586">
    <property type="term" value="F:peptide deformylase activity"/>
    <property type="evidence" value="ECO:0007669"/>
    <property type="project" value="UniProtKB-UniRule"/>
</dbReference>
<dbReference type="GO" id="GO:0043686">
    <property type="term" value="P:co-translational protein modification"/>
    <property type="evidence" value="ECO:0007669"/>
    <property type="project" value="TreeGrafter"/>
</dbReference>
<dbReference type="GO" id="GO:0006412">
    <property type="term" value="P:translation"/>
    <property type="evidence" value="ECO:0007669"/>
    <property type="project" value="UniProtKB-UniRule"/>
</dbReference>
<dbReference type="CDD" id="cd00487">
    <property type="entry name" value="Pep_deformylase"/>
    <property type="match status" value="1"/>
</dbReference>
<dbReference type="FunFam" id="3.90.45.10:FF:000001">
    <property type="entry name" value="Peptide deformylase"/>
    <property type="match status" value="1"/>
</dbReference>
<dbReference type="Gene3D" id="3.90.45.10">
    <property type="entry name" value="Peptide deformylase"/>
    <property type="match status" value="1"/>
</dbReference>
<dbReference type="HAMAP" id="MF_00163">
    <property type="entry name" value="Pep_deformylase"/>
    <property type="match status" value="1"/>
</dbReference>
<dbReference type="InterPro" id="IPR023635">
    <property type="entry name" value="Peptide_deformylase"/>
</dbReference>
<dbReference type="InterPro" id="IPR036821">
    <property type="entry name" value="Peptide_deformylase_sf"/>
</dbReference>
<dbReference type="NCBIfam" id="TIGR00079">
    <property type="entry name" value="pept_deformyl"/>
    <property type="match status" value="1"/>
</dbReference>
<dbReference type="NCBIfam" id="NF001159">
    <property type="entry name" value="PRK00150.1-3"/>
    <property type="match status" value="1"/>
</dbReference>
<dbReference type="PANTHER" id="PTHR10458">
    <property type="entry name" value="PEPTIDE DEFORMYLASE"/>
    <property type="match status" value="1"/>
</dbReference>
<dbReference type="PANTHER" id="PTHR10458:SF21">
    <property type="entry name" value="PEPTIDE DEFORMYLASE"/>
    <property type="match status" value="1"/>
</dbReference>
<dbReference type="Pfam" id="PF01327">
    <property type="entry name" value="Pep_deformylase"/>
    <property type="match status" value="1"/>
</dbReference>
<dbReference type="PIRSF" id="PIRSF004749">
    <property type="entry name" value="Pep_def"/>
    <property type="match status" value="1"/>
</dbReference>
<dbReference type="PRINTS" id="PR01576">
    <property type="entry name" value="PDEFORMYLASE"/>
</dbReference>
<dbReference type="SUPFAM" id="SSF56420">
    <property type="entry name" value="Peptide deformylase"/>
    <property type="match status" value="1"/>
</dbReference>
<evidence type="ECO:0000255" key="1">
    <source>
        <dbReference type="HAMAP-Rule" id="MF_00163"/>
    </source>
</evidence>
<comment type="function">
    <text evidence="1">Removes the formyl group from the N-terminal Met of newly synthesized proteins. Requires at least a dipeptide for an efficient rate of reaction. N-terminal L-methionine is a prerequisite for activity but the enzyme has broad specificity at other positions.</text>
</comment>
<comment type="catalytic activity">
    <reaction evidence="1">
        <text>N-terminal N-formyl-L-methionyl-[peptide] + H2O = N-terminal L-methionyl-[peptide] + formate</text>
        <dbReference type="Rhea" id="RHEA:24420"/>
        <dbReference type="Rhea" id="RHEA-COMP:10639"/>
        <dbReference type="Rhea" id="RHEA-COMP:10640"/>
        <dbReference type="ChEBI" id="CHEBI:15377"/>
        <dbReference type="ChEBI" id="CHEBI:15740"/>
        <dbReference type="ChEBI" id="CHEBI:49298"/>
        <dbReference type="ChEBI" id="CHEBI:64731"/>
        <dbReference type="EC" id="3.5.1.88"/>
    </reaction>
</comment>
<comment type="cofactor">
    <cofactor evidence="1">
        <name>Fe(2+)</name>
        <dbReference type="ChEBI" id="CHEBI:29033"/>
    </cofactor>
    <text evidence="1">Binds 1 Fe(2+) ion.</text>
</comment>
<comment type="similarity">
    <text evidence="1">Belongs to the polypeptide deformylase family.</text>
</comment>